<dbReference type="EMBL" id="CP000431">
    <property type="protein sequence ID" value="ABG96002.1"/>
    <property type="molecule type" value="Genomic_DNA"/>
</dbReference>
<dbReference type="RefSeq" id="WP_005248644.1">
    <property type="nucleotide sequence ID" value="NC_008268.1"/>
</dbReference>
<dbReference type="SMR" id="Q0S8Y4"/>
<dbReference type="GeneID" id="69888439"/>
<dbReference type="KEGG" id="rha:RHA1_ro04211"/>
<dbReference type="eggNOG" id="COG0353">
    <property type="taxonomic scope" value="Bacteria"/>
</dbReference>
<dbReference type="HOGENOM" id="CLU_060739_1_0_11"/>
<dbReference type="OrthoDB" id="9802672at2"/>
<dbReference type="Proteomes" id="UP000008710">
    <property type="component" value="Chromosome"/>
</dbReference>
<dbReference type="GO" id="GO:0003677">
    <property type="term" value="F:DNA binding"/>
    <property type="evidence" value="ECO:0007669"/>
    <property type="project" value="UniProtKB-UniRule"/>
</dbReference>
<dbReference type="GO" id="GO:0008270">
    <property type="term" value="F:zinc ion binding"/>
    <property type="evidence" value="ECO:0007669"/>
    <property type="project" value="UniProtKB-KW"/>
</dbReference>
<dbReference type="GO" id="GO:0006310">
    <property type="term" value="P:DNA recombination"/>
    <property type="evidence" value="ECO:0007669"/>
    <property type="project" value="UniProtKB-UniRule"/>
</dbReference>
<dbReference type="GO" id="GO:0006281">
    <property type="term" value="P:DNA repair"/>
    <property type="evidence" value="ECO:0007669"/>
    <property type="project" value="UniProtKB-UniRule"/>
</dbReference>
<dbReference type="CDD" id="cd01025">
    <property type="entry name" value="TOPRIM_recR"/>
    <property type="match status" value="1"/>
</dbReference>
<dbReference type="Gene3D" id="3.30.60.80">
    <property type="match status" value="1"/>
</dbReference>
<dbReference type="Gene3D" id="3.40.1360.10">
    <property type="match status" value="1"/>
</dbReference>
<dbReference type="Gene3D" id="6.10.250.240">
    <property type="match status" value="1"/>
</dbReference>
<dbReference type="Gene3D" id="1.10.8.420">
    <property type="entry name" value="RecR Domain 1"/>
    <property type="match status" value="1"/>
</dbReference>
<dbReference type="HAMAP" id="MF_00017">
    <property type="entry name" value="RecR"/>
    <property type="match status" value="1"/>
</dbReference>
<dbReference type="InterPro" id="IPR000093">
    <property type="entry name" value="DNA_Rcmb_RecR"/>
</dbReference>
<dbReference type="InterPro" id="IPR023627">
    <property type="entry name" value="Rcmb_RecR"/>
</dbReference>
<dbReference type="InterPro" id="IPR015967">
    <property type="entry name" value="Rcmb_RecR_Znf"/>
</dbReference>
<dbReference type="InterPro" id="IPR006171">
    <property type="entry name" value="TOPRIM_dom"/>
</dbReference>
<dbReference type="InterPro" id="IPR034137">
    <property type="entry name" value="TOPRIM_RecR"/>
</dbReference>
<dbReference type="NCBIfam" id="TIGR00615">
    <property type="entry name" value="recR"/>
    <property type="match status" value="1"/>
</dbReference>
<dbReference type="PANTHER" id="PTHR30446">
    <property type="entry name" value="RECOMBINATION PROTEIN RECR"/>
    <property type="match status" value="1"/>
</dbReference>
<dbReference type="PANTHER" id="PTHR30446:SF0">
    <property type="entry name" value="RECOMBINATION PROTEIN RECR"/>
    <property type="match status" value="1"/>
</dbReference>
<dbReference type="Pfam" id="PF21175">
    <property type="entry name" value="RecR_C"/>
    <property type="match status" value="1"/>
</dbReference>
<dbReference type="Pfam" id="PF21176">
    <property type="entry name" value="RecR_HhH"/>
    <property type="match status" value="1"/>
</dbReference>
<dbReference type="Pfam" id="PF02132">
    <property type="entry name" value="RecR_ZnF"/>
    <property type="match status" value="1"/>
</dbReference>
<dbReference type="Pfam" id="PF13662">
    <property type="entry name" value="Toprim_4"/>
    <property type="match status" value="1"/>
</dbReference>
<dbReference type="SMART" id="SM00493">
    <property type="entry name" value="TOPRIM"/>
    <property type="match status" value="1"/>
</dbReference>
<dbReference type="SUPFAM" id="SSF111304">
    <property type="entry name" value="Recombination protein RecR"/>
    <property type="match status" value="1"/>
</dbReference>
<dbReference type="PROSITE" id="PS01300">
    <property type="entry name" value="RECR"/>
    <property type="match status" value="1"/>
</dbReference>
<dbReference type="PROSITE" id="PS50880">
    <property type="entry name" value="TOPRIM"/>
    <property type="match status" value="1"/>
</dbReference>
<keyword id="KW-0227">DNA damage</keyword>
<keyword id="KW-0233">DNA recombination</keyword>
<keyword id="KW-0234">DNA repair</keyword>
<keyword id="KW-0479">Metal-binding</keyword>
<keyword id="KW-0862">Zinc</keyword>
<keyword id="KW-0863">Zinc-finger</keyword>
<comment type="function">
    <text evidence="1">May play a role in DNA repair. It seems to be involved in an RecBC-independent recombinational process of DNA repair. It may act with RecF and RecO.</text>
</comment>
<comment type="similarity">
    <text evidence="1">Belongs to the RecR family.</text>
</comment>
<accession>Q0S8Y4</accession>
<feature type="chain" id="PRO_0000322940" description="Recombination protein RecR">
    <location>
        <begin position="1"/>
        <end position="202"/>
    </location>
</feature>
<feature type="domain" description="Toprim" evidence="1">
    <location>
        <begin position="79"/>
        <end position="179"/>
    </location>
</feature>
<feature type="zinc finger region" description="C4-type" evidence="1">
    <location>
        <begin position="56"/>
        <end position="71"/>
    </location>
</feature>
<organism>
    <name type="scientific">Rhodococcus jostii (strain RHA1)</name>
    <dbReference type="NCBI Taxonomy" id="101510"/>
    <lineage>
        <taxon>Bacteria</taxon>
        <taxon>Bacillati</taxon>
        <taxon>Actinomycetota</taxon>
        <taxon>Actinomycetes</taxon>
        <taxon>Mycobacteriales</taxon>
        <taxon>Nocardiaceae</taxon>
        <taxon>Rhodococcus</taxon>
    </lineage>
</organism>
<protein>
    <recommendedName>
        <fullName evidence="1">Recombination protein RecR</fullName>
    </recommendedName>
</protein>
<reference key="1">
    <citation type="journal article" date="2006" name="Proc. Natl. Acad. Sci. U.S.A.">
        <title>The complete genome of Rhodococcus sp. RHA1 provides insights into a catabolic powerhouse.</title>
        <authorList>
            <person name="McLeod M.P."/>
            <person name="Warren R.L."/>
            <person name="Hsiao W.W.L."/>
            <person name="Araki N."/>
            <person name="Myhre M."/>
            <person name="Fernandes C."/>
            <person name="Miyazawa D."/>
            <person name="Wong W."/>
            <person name="Lillquist A.L."/>
            <person name="Wang D."/>
            <person name="Dosanjh M."/>
            <person name="Hara H."/>
            <person name="Petrescu A."/>
            <person name="Morin R.D."/>
            <person name="Yang G."/>
            <person name="Stott J.M."/>
            <person name="Schein J.E."/>
            <person name="Shin H."/>
            <person name="Smailus D."/>
            <person name="Siddiqui A.S."/>
            <person name="Marra M.A."/>
            <person name="Jones S.J.M."/>
            <person name="Holt R."/>
            <person name="Brinkman F.S.L."/>
            <person name="Miyauchi K."/>
            <person name="Fukuda M."/>
            <person name="Davies J.E."/>
            <person name="Mohn W.W."/>
            <person name="Eltis L.D."/>
        </authorList>
    </citation>
    <scope>NUCLEOTIDE SEQUENCE [LARGE SCALE GENOMIC DNA]</scope>
    <source>
        <strain>RHA1</strain>
    </source>
</reference>
<name>RECR_RHOJR</name>
<evidence type="ECO:0000255" key="1">
    <source>
        <dbReference type="HAMAP-Rule" id="MF_00017"/>
    </source>
</evidence>
<gene>
    <name evidence="1" type="primary">recR</name>
    <name type="ordered locus">RHA1_ro04211</name>
</gene>
<proteinExistence type="inferred from homology"/>
<sequence length="202" mass="22145">MYEGPVQDLIDELGKLPGVGPKSAQRIAFHLLSVEPPEIDRLKNALQRVRDGVQFCVVCGTVSDKEHCRICADPRRDRTVICVVEEPKDVQAVERTREFKGRYHVLGGALDPLSGVGPDQLRIRELLARIGNQEDGVDVSEVIIATDPNTEGEATATYLVRMLRDFPGLTVSRLASGLPMGGDLEFADELTLGRALSGRRTL</sequence>